<name>METE_PSEMZ</name>
<evidence type="ECO:0000250" key="1">
    <source>
        <dbReference type="UniProtKB" id="O50008"/>
    </source>
</evidence>
<evidence type="ECO:0000255" key="2"/>
<evidence type="ECO:0000303" key="3">
    <source>
    </source>
</evidence>
<evidence type="ECO:0000305" key="4"/>
<proteinExistence type="evidence at protein level"/>
<keyword id="KW-0028">Amino-acid biosynthesis</keyword>
<keyword id="KW-0963">Cytoplasm</keyword>
<keyword id="KW-0479">Metal-binding</keyword>
<keyword id="KW-0486">Methionine biosynthesis</keyword>
<keyword id="KW-0489">Methyltransferase</keyword>
<keyword id="KW-0808">Transferase</keyword>
<keyword id="KW-0862">Zinc</keyword>
<organism>
    <name type="scientific">Pseudotsuga menziesii</name>
    <name type="common">Douglas-fir</name>
    <name type="synonym">Abies menziesii</name>
    <dbReference type="NCBI Taxonomy" id="3357"/>
    <lineage>
        <taxon>Eukaryota</taxon>
        <taxon>Viridiplantae</taxon>
        <taxon>Streptophyta</taxon>
        <taxon>Embryophyta</taxon>
        <taxon>Tracheophyta</taxon>
        <taxon>Spermatophyta</taxon>
        <taxon>Pinopsida</taxon>
        <taxon>Pinidae</taxon>
        <taxon>Conifers I</taxon>
        <taxon>Pinales</taxon>
        <taxon>Pinaceae</taxon>
        <taxon>Pseudotsuga</taxon>
    </lineage>
</organism>
<sequence>FALESFWDGKGNASAHAMEMTK</sequence>
<comment type="function">
    <text evidence="1">Catalyzes the transfer of a methyl group from 5-methyltetrahydrofolate to homocysteine resulting in methionine formation.</text>
</comment>
<comment type="catalytic activity">
    <reaction evidence="1">
        <text>5-methyltetrahydropteroyltri-L-glutamate + L-homocysteine = tetrahydropteroyltri-L-glutamate + L-methionine</text>
        <dbReference type="Rhea" id="RHEA:21196"/>
        <dbReference type="ChEBI" id="CHEBI:57844"/>
        <dbReference type="ChEBI" id="CHEBI:58140"/>
        <dbReference type="ChEBI" id="CHEBI:58199"/>
        <dbReference type="ChEBI" id="CHEBI:58207"/>
        <dbReference type="EC" id="2.1.1.14"/>
    </reaction>
</comment>
<comment type="cofactor">
    <cofactor evidence="1">
        <name>Zn(2+)</name>
        <dbReference type="ChEBI" id="CHEBI:29105"/>
    </cofactor>
</comment>
<comment type="pathway">
    <text evidence="1">Amino-acid biosynthesis; L-methionine biosynthesis via de novo pathway; L-methionine from L-homocysteine (MetE route): step 1/1.</text>
</comment>
<comment type="subcellular location">
    <subcellularLocation>
        <location evidence="1">Cytoplasm</location>
    </subcellularLocation>
</comment>
<comment type="similarity">
    <text evidence="2">Belongs to the vitamin-B12 independent methionine synthase family.</text>
</comment>
<accession>P85918</accession>
<reference evidence="4" key="1">
    <citation type="journal article" date="2008" name="J. Proteomics">
        <title>A proteomics approach to identify proteins differentially expressed in Douglas-fir seedlings infected by Phellinus sulphurascens.</title>
        <authorList>
            <person name="Islam M.A."/>
            <person name="Sturrock R.N."/>
            <person name="Ekramoddoullah A.K.M."/>
        </authorList>
    </citation>
    <scope>IDENTIFICATION BY MASS SPECTROMETRY</scope>
</reference>
<dbReference type="EC" id="2.1.1.14"/>
<dbReference type="UniPathway" id="UPA00051">
    <property type="reaction ID" value="UER00082"/>
</dbReference>
<dbReference type="GO" id="GO:0005737">
    <property type="term" value="C:cytoplasm"/>
    <property type="evidence" value="ECO:0007669"/>
    <property type="project" value="UniProtKB-SubCell"/>
</dbReference>
<dbReference type="GO" id="GO:0003871">
    <property type="term" value="F:5-methyltetrahydropteroyltriglutamate-homocysteine S-methyltransferase activity"/>
    <property type="evidence" value="ECO:0007669"/>
    <property type="project" value="UniProtKB-EC"/>
</dbReference>
<dbReference type="GO" id="GO:0046872">
    <property type="term" value="F:metal ion binding"/>
    <property type="evidence" value="ECO:0007669"/>
    <property type="project" value="UniProtKB-KW"/>
</dbReference>
<dbReference type="GO" id="GO:0009086">
    <property type="term" value="P:methionine biosynthetic process"/>
    <property type="evidence" value="ECO:0007669"/>
    <property type="project" value="UniProtKB-KW"/>
</dbReference>
<dbReference type="GO" id="GO:0032259">
    <property type="term" value="P:methylation"/>
    <property type="evidence" value="ECO:0007669"/>
    <property type="project" value="UniProtKB-KW"/>
</dbReference>
<protein>
    <recommendedName>
        <fullName evidence="1">5-methyltetrahydropteroyltriglutamate--homocysteine methyltransferase</fullName>
        <ecNumber>2.1.1.14</ecNumber>
    </recommendedName>
    <alternativeName>
        <fullName evidence="1">Cobalamin-independent methionine synthase isozyme</fullName>
    </alternativeName>
    <alternativeName>
        <fullName evidence="1">Vitamin-B12-independent methionine synthase isozyme</fullName>
    </alternativeName>
</protein>
<feature type="chain" id="PRO_0000397958" description="5-methyltetrahydropteroyltriglutamate--homocysteine methyltransferase">
    <location>
        <begin position="1" status="less than"/>
        <end position="22" status="greater than"/>
    </location>
</feature>
<feature type="non-consecutive residues" evidence="3">
    <location>
        <begin position="10"/>
        <end position="11"/>
    </location>
</feature>
<feature type="non-terminal residue" evidence="3">
    <location>
        <position position="1"/>
    </location>
</feature>
<feature type="non-terminal residue" evidence="3">
    <location>
        <position position="22"/>
    </location>
</feature>